<protein>
    <recommendedName>
        <fullName evidence="1">23S rRNA (uracil(1939)-C(5))-methyltransferase RlmD</fullName>
        <ecNumber evidence="1">2.1.1.190</ecNumber>
    </recommendedName>
    <alternativeName>
        <fullName evidence="1">23S rRNA(m5U1939)-methyltransferase</fullName>
    </alternativeName>
</protein>
<sequence length="440" mass="49008">MARFFQPKKHSTLDTKHQPVTIERLDHQGSGLAFLHKKPLFVDGALPGEEVLIQLTENKSKYARGQLIKVLKPSAERVAPFCAHYAQCGGCDLQHLDRAGQIHHKQQALSQLMVKFAGQSLALSAPVCSDDQGYRRRARLSLMWDKKTQQLQLGFRRKQSKAIVNVTHCPVLEPSLNALLPDLNALLSEWSQPERLGHVELVKGDNTRVLVLRHLGALIEQDQQRLTDFASQNQLTLYLMLEAGELQHVQGEAPYCEETGSRLSFLPSHFIQVNRAVNQHMVVQALNWLEVSPQERVLDLFCGLGNFTLPLAKQAQAVVGVEGVDEMVQHATHNAKLNQINNVAFYQANLEQDMTSASWAQQKFAKVLLDPARAGAEGIVDQLSALGAKRVVYVSCNPATLARDSQSLLSQGFRLEKLGMLDMFPHTSHLESMALFVKKG</sequence>
<organism>
    <name type="scientific">Vibrio cholerae serotype O1 (strain M66-2)</name>
    <dbReference type="NCBI Taxonomy" id="579112"/>
    <lineage>
        <taxon>Bacteria</taxon>
        <taxon>Pseudomonadati</taxon>
        <taxon>Pseudomonadota</taxon>
        <taxon>Gammaproteobacteria</taxon>
        <taxon>Vibrionales</taxon>
        <taxon>Vibrionaceae</taxon>
        <taxon>Vibrio</taxon>
    </lineage>
</organism>
<evidence type="ECO:0000255" key="1">
    <source>
        <dbReference type="HAMAP-Rule" id="MF_01010"/>
    </source>
</evidence>
<accession>C3LQZ5</accession>
<proteinExistence type="inferred from homology"/>
<gene>
    <name evidence="1" type="primary">rlmD</name>
    <name type="synonym">rumA</name>
    <name type="ordered locus">VCM66_2375</name>
</gene>
<reference key="1">
    <citation type="journal article" date="2008" name="PLoS ONE">
        <title>A recalibrated molecular clock and independent origins for the cholera pandemic clones.</title>
        <authorList>
            <person name="Feng L."/>
            <person name="Reeves P.R."/>
            <person name="Lan R."/>
            <person name="Ren Y."/>
            <person name="Gao C."/>
            <person name="Zhou Z."/>
            <person name="Ren Y."/>
            <person name="Cheng J."/>
            <person name="Wang W."/>
            <person name="Wang J."/>
            <person name="Qian W."/>
            <person name="Li D."/>
            <person name="Wang L."/>
        </authorList>
    </citation>
    <scope>NUCLEOTIDE SEQUENCE [LARGE SCALE GENOMIC DNA]</scope>
    <source>
        <strain>M66-2</strain>
    </source>
</reference>
<name>RLMD_VIBCM</name>
<comment type="function">
    <text evidence="1">Catalyzes the formation of 5-methyl-uridine at position 1939 (m5U1939) in 23S rRNA.</text>
</comment>
<comment type="catalytic activity">
    <reaction evidence="1">
        <text>uridine(1939) in 23S rRNA + S-adenosyl-L-methionine = 5-methyluridine(1939) in 23S rRNA + S-adenosyl-L-homocysteine + H(+)</text>
        <dbReference type="Rhea" id="RHEA:42908"/>
        <dbReference type="Rhea" id="RHEA-COMP:10278"/>
        <dbReference type="Rhea" id="RHEA-COMP:10279"/>
        <dbReference type="ChEBI" id="CHEBI:15378"/>
        <dbReference type="ChEBI" id="CHEBI:57856"/>
        <dbReference type="ChEBI" id="CHEBI:59789"/>
        <dbReference type="ChEBI" id="CHEBI:65315"/>
        <dbReference type="ChEBI" id="CHEBI:74447"/>
        <dbReference type="EC" id="2.1.1.190"/>
    </reaction>
</comment>
<comment type="similarity">
    <text evidence="1">Belongs to the class I-like SAM-binding methyltransferase superfamily. RNA M5U methyltransferase family. RlmD subfamily.</text>
</comment>
<keyword id="KW-0004">4Fe-4S</keyword>
<keyword id="KW-0408">Iron</keyword>
<keyword id="KW-0411">Iron-sulfur</keyword>
<keyword id="KW-0479">Metal-binding</keyword>
<keyword id="KW-0489">Methyltransferase</keyword>
<keyword id="KW-0698">rRNA processing</keyword>
<keyword id="KW-0949">S-adenosyl-L-methionine</keyword>
<keyword id="KW-0808">Transferase</keyword>
<feature type="chain" id="PRO_1000148883" description="23S rRNA (uracil(1939)-C(5))-methyltransferase RlmD">
    <location>
        <begin position="1"/>
        <end position="440"/>
    </location>
</feature>
<feature type="domain" description="TRAM" evidence="1">
    <location>
        <begin position="11"/>
        <end position="69"/>
    </location>
</feature>
<feature type="active site" description="Nucleophile" evidence="1">
    <location>
        <position position="396"/>
    </location>
</feature>
<feature type="binding site" evidence="1">
    <location>
        <position position="82"/>
    </location>
    <ligand>
        <name>[4Fe-4S] cluster</name>
        <dbReference type="ChEBI" id="CHEBI:49883"/>
    </ligand>
</feature>
<feature type="binding site" evidence="1">
    <location>
        <position position="88"/>
    </location>
    <ligand>
        <name>[4Fe-4S] cluster</name>
        <dbReference type="ChEBI" id="CHEBI:49883"/>
    </ligand>
</feature>
<feature type="binding site" evidence="1">
    <location>
        <position position="91"/>
    </location>
    <ligand>
        <name>[4Fe-4S] cluster</name>
        <dbReference type="ChEBI" id="CHEBI:49883"/>
    </ligand>
</feature>
<feature type="binding site" evidence="1">
    <location>
        <position position="169"/>
    </location>
    <ligand>
        <name>[4Fe-4S] cluster</name>
        <dbReference type="ChEBI" id="CHEBI:49883"/>
    </ligand>
</feature>
<feature type="binding site" evidence="1">
    <location>
        <position position="272"/>
    </location>
    <ligand>
        <name>S-adenosyl-L-methionine</name>
        <dbReference type="ChEBI" id="CHEBI:59789"/>
    </ligand>
</feature>
<feature type="binding site" evidence="1">
    <location>
        <position position="301"/>
    </location>
    <ligand>
        <name>S-adenosyl-L-methionine</name>
        <dbReference type="ChEBI" id="CHEBI:59789"/>
    </ligand>
</feature>
<feature type="binding site" evidence="1">
    <location>
        <position position="306"/>
    </location>
    <ligand>
        <name>S-adenosyl-L-methionine</name>
        <dbReference type="ChEBI" id="CHEBI:59789"/>
    </ligand>
</feature>
<feature type="binding site" evidence="1">
    <location>
        <position position="322"/>
    </location>
    <ligand>
        <name>S-adenosyl-L-methionine</name>
        <dbReference type="ChEBI" id="CHEBI:59789"/>
    </ligand>
</feature>
<feature type="binding site" evidence="1">
    <location>
        <position position="349"/>
    </location>
    <ligand>
        <name>S-adenosyl-L-methionine</name>
        <dbReference type="ChEBI" id="CHEBI:59789"/>
    </ligand>
</feature>
<feature type="binding site" evidence="1">
    <location>
        <position position="370"/>
    </location>
    <ligand>
        <name>S-adenosyl-L-methionine</name>
        <dbReference type="ChEBI" id="CHEBI:59789"/>
    </ligand>
</feature>
<dbReference type="EC" id="2.1.1.190" evidence="1"/>
<dbReference type="EMBL" id="CP001233">
    <property type="protein sequence ID" value="ACP06673.1"/>
    <property type="molecule type" value="Genomic_DNA"/>
</dbReference>
<dbReference type="RefSeq" id="WP_000090462.1">
    <property type="nucleotide sequence ID" value="NC_012578.1"/>
</dbReference>
<dbReference type="SMR" id="C3LQZ5"/>
<dbReference type="KEGG" id="vcm:VCM66_2375"/>
<dbReference type="HOGENOM" id="CLU_014689_8_2_6"/>
<dbReference type="Proteomes" id="UP000001217">
    <property type="component" value="Chromosome I"/>
</dbReference>
<dbReference type="GO" id="GO:0051539">
    <property type="term" value="F:4 iron, 4 sulfur cluster binding"/>
    <property type="evidence" value="ECO:0007669"/>
    <property type="project" value="UniProtKB-KW"/>
</dbReference>
<dbReference type="GO" id="GO:0005506">
    <property type="term" value="F:iron ion binding"/>
    <property type="evidence" value="ECO:0007669"/>
    <property type="project" value="UniProtKB-UniRule"/>
</dbReference>
<dbReference type="GO" id="GO:0003723">
    <property type="term" value="F:RNA binding"/>
    <property type="evidence" value="ECO:0007669"/>
    <property type="project" value="InterPro"/>
</dbReference>
<dbReference type="GO" id="GO:0070041">
    <property type="term" value="F:rRNA (uridine-C5-)-methyltransferase activity"/>
    <property type="evidence" value="ECO:0007669"/>
    <property type="project" value="UniProtKB-UniRule"/>
</dbReference>
<dbReference type="GO" id="GO:0070475">
    <property type="term" value="P:rRNA base methylation"/>
    <property type="evidence" value="ECO:0007669"/>
    <property type="project" value="TreeGrafter"/>
</dbReference>
<dbReference type="CDD" id="cd02440">
    <property type="entry name" value="AdoMet_MTases"/>
    <property type="match status" value="1"/>
</dbReference>
<dbReference type="FunFam" id="3.40.50.150:FF:000009">
    <property type="entry name" value="23S rRNA (Uracil(1939)-C(5))-methyltransferase RlmD"/>
    <property type="match status" value="1"/>
</dbReference>
<dbReference type="FunFam" id="2.40.50.1070:FF:000004">
    <property type="entry name" value="23S rRNA (uracil(1939)-C(5))-methyltransferase RlmD"/>
    <property type="match status" value="1"/>
</dbReference>
<dbReference type="FunFam" id="2.40.50.140:FF:000097">
    <property type="entry name" value="23S rRNA (uracil(1939)-C(5))-methyltransferase RlmD"/>
    <property type="match status" value="1"/>
</dbReference>
<dbReference type="Gene3D" id="2.40.50.1070">
    <property type="match status" value="1"/>
</dbReference>
<dbReference type="Gene3D" id="2.40.50.140">
    <property type="entry name" value="Nucleic acid-binding proteins"/>
    <property type="match status" value="1"/>
</dbReference>
<dbReference type="Gene3D" id="3.40.50.150">
    <property type="entry name" value="Vaccinia Virus protein VP39"/>
    <property type="match status" value="1"/>
</dbReference>
<dbReference type="HAMAP" id="MF_01010">
    <property type="entry name" value="23SrRNA_methyltr_RlmD"/>
    <property type="match status" value="1"/>
</dbReference>
<dbReference type="InterPro" id="IPR001566">
    <property type="entry name" value="23S_rRNA_MeTrfase_RlmD"/>
</dbReference>
<dbReference type="InterPro" id="IPR030390">
    <property type="entry name" value="MeTrfase_TrmA_AS"/>
</dbReference>
<dbReference type="InterPro" id="IPR030391">
    <property type="entry name" value="MeTrfase_TrmA_CS"/>
</dbReference>
<dbReference type="InterPro" id="IPR012340">
    <property type="entry name" value="NA-bd_OB-fold"/>
</dbReference>
<dbReference type="InterPro" id="IPR029063">
    <property type="entry name" value="SAM-dependent_MTases_sf"/>
</dbReference>
<dbReference type="InterPro" id="IPR002792">
    <property type="entry name" value="TRAM_dom"/>
</dbReference>
<dbReference type="InterPro" id="IPR010280">
    <property type="entry name" value="U5_MeTrfase_fam"/>
</dbReference>
<dbReference type="NCBIfam" id="NF009639">
    <property type="entry name" value="PRK13168.1"/>
    <property type="match status" value="1"/>
</dbReference>
<dbReference type="NCBIfam" id="TIGR00479">
    <property type="entry name" value="rumA"/>
    <property type="match status" value="1"/>
</dbReference>
<dbReference type="PANTHER" id="PTHR11061:SF49">
    <property type="entry name" value="23S RRNA (URACIL(1939)-C(5))-METHYLTRANSFERASE RLMD"/>
    <property type="match status" value="1"/>
</dbReference>
<dbReference type="PANTHER" id="PTHR11061">
    <property type="entry name" value="RNA M5U METHYLTRANSFERASE"/>
    <property type="match status" value="1"/>
</dbReference>
<dbReference type="Pfam" id="PF01938">
    <property type="entry name" value="TRAM"/>
    <property type="match status" value="1"/>
</dbReference>
<dbReference type="Pfam" id="PF05958">
    <property type="entry name" value="tRNA_U5-meth_tr"/>
    <property type="match status" value="1"/>
</dbReference>
<dbReference type="SUPFAM" id="SSF50249">
    <property type="entry name" value="Nucleic acid-binding proteins"/>
    <property type="match status" value="1"/>
</dbReference>
<dbReference type="SUPFAM" id="SSF53335">
    <property type="entry name" value="S-adenosyl-L-methionine-dependent methyltransferases"/>
    <property type="match status" value="1"/>
</dbReference>
<dbReference type="PROSITE" id="PS51687">
    <property type="entry name" value="SAM_MT_RNA_M5U"/>
    <property type="match status" value="1"/>
</dbReference>
<dbReference type="PROSITE" id="PS50926">
    <property type="entry name" value="TRAM"/>
    <property type="match status" value="1"/>
</dbReference>
<dbReference type="PROSITE" id="PS01230">
    <property type="entry name" value="TRMA_1"/>
    <property type="match status" value="1"/>
</dbReference>
<dbReference type="PROSITE" id="PS01231">
    <property type="entry name" value="TRMA_2"/>
    <property type="match status" value="1"/>
</dbReference>